<reference key="1">
    <citation type="journal article" date="2007" name="Plant Cell">
        <title>Calcium-dependent protein kinases regulate the production of reactive oxygen species by potato NADPH oxidase.</title>
        <authorList>
            <person name="Kobayashi M."/>
            <person name="Ohura I."/>
            <person name="Kawakita K."/>
            <person name="Yokota N."/>
            <person name="Fujiwara M."/>
            <person name="Shimamoto K."/>
            <person name="Doke N."/>
            <person name="Yoshioka H."/>
        </authorList>
    </citation>
    <scope>NUCLEOTIDE SEQUENCE [MRNA]</scope>
    <scope>FUNCTION</scope>
    <scope>ACTIVATION BY CALCIUM</scope>
</reference>
<comment type="function">
    <text evidence="7">Regulates the production of reactive oxygen species (ROS) by NADPH oxidase.</text>
</comment>
<comment type="catalytic activity">
    <reaction>
        <text>L-seryl-[protein] + ATP = O-phospho-L-seryl-[protein] + ADP + H(+)</text>
        <dbReference type="Rhea" id="RHEA:17989"/>
        <dbReference type="Rhea" id="RHEA-COMP:9863"/>
        <dbReference type="Rhea" id="RHEA-COMP:11604"/>
        <dbReference type="ChEBI" id="CHEBI:15378"/>
        <dbReference type="ChEBI" id="CHEBI:29999"/>
        <dbReference type="ChEBI" id="CHEBI:30616"/>
        <dbReference type="ChEBI" id="CHEBI:83421"/>
        <dbReference type="ChEBI" id="CHEBI:456216"/>
        <dbReference type="EC" id="2.7.11.1"/>
    </reaction>
</comment>
<comment type="catalytic activity">
    <reaction>
        <text>L-threonyl-[protein] + ATP = O-phospho-L-threonyl-[protein] + ADP + H(+)</text>
        <dbReference type="Rhea" id="RHEA:46608"/>
        <dbReference type="Rhea" id="RHEA-COMP:11060"/>
        <dbReference type="Rhea" id="RHEA-COMP:11605"/>
        <dbReference type="ChEBI" id="CHEBI:15378"/>
        <dbReference type="ChEBI" id="CHEBI:30013"/>
        <dbReference type="ChEBI" id="CHEBI:30616"/>
        <dbReference type="ChEBI" id="CHEBI:61977"/>
        <dbReference type="ChEBI" id="CHEBI:456216"/>
        <dbReference type="EC" id="2.7.11.1"/>
    </reaction>
</comment>
<comment type="activity regulation">
    <text evidence="1">Activated by calcium. Autophosphorylation may play an important role in the regulation of the kinase activity (By similarity).</text>
</comment>
<comment type="subcellular location">
    <subcellularLocation>
        <location evidence="8">Membrane</location>
        <topology evidence="8">Lipid-anchor</topology>
    </subcellularLocation>
</comment>
<comment type="domain">
    <text evidence="1">There are 3 contiguous domains conserved in the CDPK subfamily: a kinase domain, an autoinhibitory (junction) domain and a calmodulin-like domain. The autoinhibitory domain (358-388) inactivates kinase activity under calcium-free conditions (By similarity).</text>
</comment>
<comment type="similarity">
    <text evidence="3">Belongs to the protein kinase superfamily. Ser/Thr protein kinase family. CDPK subfamily.</text>
</comment>
<proteinExistence type="evidence at transcript level"/>
<sequence>MGNTCRGSIGGKTFQGYTQPEDSSCSTNHNPSSGNSYSSSDNFSPTSNAQQNSNHKKEHSLSLVSPRKASMNRSGSNQAYYVMGHMTPNIRDLYTLGRKLGQGQFGTTYLCTENSTGAEYACKSISKRKLISKEDVEDVRREIQIMHHLSGHRNIVTIKGAYEDPLYVHIVMEICSGGELFDRIIQRGHYSERKAAELTKIIVGVVEACHSLGVMHRDLKPENFLLVNKDNDFSLKAIDFGLSVFFKPGQIFTDVVGSPYYVAPEVLLKHYGPEADVWTAGVILYILLSGVPPFWAETQQGIFDAVLKGHIDFDSDPWPLISESAKDLIRKMLCMQPSERLTAHEVLCHPWICENGVAPDRALDPAVLSRLKQFSAMNKLKKMALRVIAESLSEEEIAGLREMFKAMDTDSSGAITFDELKAGLRKYGSTLKDTEIRELMDAADVDNSGTIDYGEFIAATVHLNKLEREEHLMAAFQYFDKDGSGYITVDEVQQACIEHNMTDVYFEDIIREVDQDNDGRIDYGEFVAMMQKGNPCIGRRTMRNSLNLSMRDAPGAQ</sequence>
<name>CDPK4_SOLTU</name>
<protein>
    <recommendedName>
        <fullName>Calcium-dependent protein kinase 4</fullName>
        <shortName>CDPK 4</shortName>
        <shortName>StCDPK4</shortName>
        <ecNumber>2.7.11.1</ecNumber>
    </recommendedName>
</protein>
<gene>
    <name type="primary">CPK4</name>
    <name type="synonym">CDPK4</name>
</gene>
<keyword id="KW-0067">ATP-binding</keyword>
<keyword id="KW-0106">Calcium</keyword>
<keyword id="KW-0418">Kinase</keyword>
<keyword id="KW-0449">Lipoprotein</keyword>
<keyword id="KW-0472">Membrane</keyword>
<keyword id="KW-0479">Metal-binding</keyword>
<keyword id="KW-0519">Myristate</keyword>
<keyword id="KW-0547">Nucleotide-binding</keyword>
<keyword id="KW-0597">Phosphoprotein</keyword>
<keyword id="KW-1185">Reference proteome</keyword>
<keyword id="KW-0677">Repeat</keyword>
<keyword id="KW-0723">Serine/threonine-protein kinase</keyword>
<keyword id="KW-0808">Transferase</keyword>
<organism>
    <name type="scientific">Solanum tuberosum</name>
    <name type="common">Potato</name>
    <dbReference type="NCBI Taxonomy" id="4113"/>
    <lineage>
        <taxon>Eukaryota</taxon>
        <taxon>Viridiplantae</taxon>
        <taxon>Streptophyta</taxon>
        <taxon>Embryophyta</taxon>
        <taxon>Tracheophyta</taxon>
        <taxon>Spermatophyta</taxon>
        <taxon>Magnoliopsida</taxon>
        <taxon>eudicotyledons</taxon>
        <taxon>Gunneridae</taxon>
        <taxon>Pentapetalae</taxon>
        <taxon>asterids</taxon>
        <taxon>lamiids</taxon>
        <taxon>Solanales</taxon>
        <taxon>Solanaceae</taxon>
        <taxon>Solanoideae</taxon>
        <taxon>Solaneae</taxon>
        <taxon>Solanum</taxon>
    </lineage>
</organism>
<evidence type="ECO:0000250" key="1"/>
<evidence type="ECO:0000255" key="2"/>
<evidence type="ECO:0000255" key="3">
    <source>
        <dbReference type="PROSITE-ProRule" id="PRU00159"/>
    </source>
</evidence>
<evidence type="ECO:0000255" key="4">
    <source>
        <dbReference type="PROSITE-ProRule" id="PRU00448"/>
    </source>
</evidence>
<evidence type="ECO:0000255" key="5">
    <source>
        <dbReference type="PROSITE-ProRule" id="PRU10027"/>
    </source>
</evidence>
<evidence type="ECO:0000256" key="6">
    <source>
        <dbReference type="SAM" id="MobiDB-lite"/>
    </source>
</evidence>
<evidence type="ECO:0000269" key="7">
    <source>
    </source>
</evidence>
<evidence type="ECO:0000305" key="8"/>
<dbReference type="EC" id="2.7.11.1"/>
<dbReference type="EMBL" id="AB279737">
    <property type="protein sequence ID" value="BAF57913.1"/>
    <property type="molecule type" value="mRNA"/>
</dbReference>
<dbReference type="RefSeq" id="NP_001274806.1">
    <property type="nucleotide sequence ID" value="NM_001287877.1"/>
</dbReference>
<dbReference type="SMR" id="A5A7I7"/>
<dbReference type="FunCoup" id="A5A7I7">
    <property type="interactions" value="1860"/>
</dbReference>
<dbReference type="STRING" id="4113.A5A7I7"/>
<dbReference type="GeneID" id="102604043"/>
<dbReference type="KEGG" id="sot:102604043"/>
<dbReference type="eggNOG" id="KOG0032">
    <property type="taxonomic scope" value="Eukaryota"/>
</dbReference>
<dbReference type="InParanoid" id="A5A7I7"/>
<dbReference type="OrthoDB" id="40902at2759"/>
<dbReference type="Proteomes" id="UP000011115">
    <property type="component" value="Unassembled WGS sequence"/>
</dbReference>
<dbReference type="ExpressionAtlas" id="A5A7I7">
    <property type="expression patterns" value="baseline"/>
</dbReference>
<dbReference type="GO" id="GO:0005737">
    <property type="term" value="C:cytoplasm"/>
    <property type="evidence" value="ECO:0000318"/>
    <property type="project" value="GO_Central"/>
</dbReference>
<dbReference type="GO" id="GO:0016020">
    <property type="term" value="C:membrane"/>
    <property type="evidence" value="ECO:0007669"/>
    <property type="project" value="UniProtKB-SubCell"/>
</dbReference>
<dbReference type="GO" id="GO:0005634">
    <property type="term" value="C:nucleus"/>
    <property type="evidence" value="ECO:0000318"/>
    <property type="project" value="GO_Central"/>
</dbReference>
<dbReference type="GO" id="GO:0005524">
    <property type="term" value="F:ATP binding"/>
    <property type="evidence" value="ECO:0007669"/>
    <property type="project" value="UniProtKB-KW"/>
</dbReference>
<dbReference type="GO" id="GO:0005509">
    <property type="term" value="F:calcium ion binding"/>
    <property type="evidence" value="ECO:0007669"/>
    <property type="project" value="InterPro"/>
</dbReference>
<dbReference type="GO" id="GO:0009931">
    <property type="term" value="F:calcium-dependent protein serine/threonine kinase activity"/>
    <property type="evidence" value="ECO:0000318"/>
    <property type="project" value="GO_Central"/>
</dbReference>
<dbReference type="GO" id="GO:0004683">
    <property type="term" value="F:calcium/calmodulin-dependent protein kinase activity"/>
    <property type="evidence" value="ECO:0000318"/>
    <property type="project" value="GO_Central"/>
</dbReference>
<dbReference type="GO" id="GO:0005516">
    <property type="term" value="F:calmodulin binding"/>
    <property type="evidence" value="ECO:0000318"/>
    <property type="project" value="GO_Central"/>
</dbReference>
<dbReference type="GO" id="GO:0106310">
    <property type="term" value="F:protein serine kinase activity"/>
    <property type="evidence" value="ECO:0007669"/>
    <property type="project" value="RHEA"/>
</dbReference>
<dbReference type="GO" id="GO:0035556">
    <property type="term" value="P:intracellular signal transduction"/>
    <property type="evidence" value="ECO:0000318"/>
    <property type="project" value="GO_Central"/>
</dbReference>
<dbReference type="CDD" id="cd05117">
    <property type="entry name" value="STKc_CAMK"/>
    <property type="match status" value="1"/>
</dbReference>
<dbReference type="FunFam" id="1.10.238.10:FF:000015">
    <property type="entry name" value="Calcium-dependent protein kinase 1"/>
    <property type="match status" value="1"/>
</dbReference>
<dbReference type="FunFam" id="3.30.200.20:FF:000004">
    <property type="entry name" value="Calcium-dependent protein kinase 1"/>
    <property type="match status" value="1"/>
</dbReference>
<dbReference type="FunFam" id="1.10.510.10:FF:000178">
    <property type="entry name" value="Calcium-dependent protein kinase 5"/>
    <property type="match status" value="1"/>
</dbReference>
<dbReference type="Gene3D" id="1.10.238.10">
    <property type="entry name" value="EF-hand"/>
    <property type="match status" value="1"/>
</dbReference>
<dbReference type="Gene3D" id="3.30.200.20">
    <property type="entry name" value="Phosphorylase Kinase, domain 1"/>
    <property type="match status" value="1"/>
</dbReference>
<dbReference type="Gene3D" id="1.10.510.10">
    <property type="entry name" value="Transferase(Phosphotransferase) domain 1"/>
    <property type="match status" value="1"/>
</dbReference>
<dbReference type="InterPro" id="IPR050205">
    <property type="entry name" value="CDPK_Ser/Thr_kinases"/>
</dbReference>
<dbReference type="InterPro" id="IPR011992">
    <property type="entry name" value="EF-hand-dom_pair"/>
</dbReference>
<dbReference type="InterPro" id="IPR018247">
    <property type="entry name" value="EF_Hand_1_Ca_BS"/>
</dbReference>
<dbReference type="InterPro" id="IPR002048">
    <property type="entry name" value="EF_hand_dom"/>
</dbReference>
<dbReference type="InterPro" id="IPR011009">
    <property type="entry name" value="Kinase-like_dom_sf"/>
</dbReference>
<dbReference type="InterPro" id="IPR000719">
    <property type="entry name" value="Prot_kinase_dom"/>
</dbReference>
<dbReference type="InterPro" id="IPR017441">
    <property type="entry name" value="Protein_kinase_ATP_BS"/>
</dbReference>
<dbReference type="InterPro" id="IPR008271">
    <property type="entry name" value="Ser/Thr_kinase_AS"/>
</dbReference>
<dbReference type="PANTHER" id="PTHR24349">
    <property type="entry name" value="SERINE/THREONINE-PROTEIN KINASE"/>
    <property type="match status" value="1"/>
</dbReference>
<dbReference type="Pfam" id="PF13499">
    <property type="entry name" value="EF-hand_7"/>
    <property type="match status" value="2"/>
</dbReference>
<dbReference type="Pfam" id="PF00069">
    <property type="entry name" value="Pkinase"/>
    <property type="match status" value="1"/>
</dbReference>
<dbReference type="SMART" id="SM00054">
    <property type="entry name" value="EFh"/>
    <property type="match status" value="4"/>
</dbReference>
<dbReference type="SMART" id="SM00220">
    <property type="entry name" value="S_TKc"/>
    <property type="match status" value="1"/>
</dbReference>
<dbReference type="SUPFAM" id="SSF47473">
    <property type="entry name" value="EF-hand"/>
    <property type="match status" value="1"/>
</dbReference>
<dbReference type="SUPFAM" id="SSF56112">
    <property type="entry name" value="Protein kinase-like (PK-like)"/>
    <property type="match status" value="1"/>
</dbReference>
<dbReference type="PROSITE" id="PS00018">
    <property type="entry name" value="EF_HAND_1"/>
    <property type="match status" value="4"/>
</dbReference>
<dbReference type="PROSITE" id="PS50222">
    <property type="entry name" value="EF_HAND_2"/>
    <property type="match status" value="4"/>
</dbReference>
<dbReference type="PROSITE" id="PS00107">
    <property type="entry name" value="PROTEIN_KINASE_ATP"/>
    <property type="match status" value="1"/>
</dbReference>
<dbReference type="PROSITE" id="PS50011">
    <property type="entry name" value="PROTEIN_KINASE_DOM"/>
    <property type="match status" value="1"/>
</dbReference>
<dbReference type="PROSITE" id="PS00108">
    <property type="entry name" value="PROTEIN_KINASE_ST"/>
    <property type="match status" value="1"/>
</dbReference>
<accession>A5A7I7</accession>
<feature type="initiator methionine" description="Removed" evidence="2">
    <location>
        <position position="1"/>
    </location>
</feature>
<feature type="chain" id="PRO_0000313744" description="Calcium-dependent protein kinase 4">
    <location>
        <begin position="2"/>
        <end position="557"/>
    </location>
</feature>
<feature type="domain" description="Protein kinase" evidence="3">
    <location>
        <begin position="94"/>
        <end position="352"/>
    </location>
</feature>
<feature type="domain" description="EF-hand 1" evidence="4">
    <location>
        <begin position="395"/>
        <end position="430"/>
    </location>
</feature>
<feature type="domain" description="EF-hand 2" evidence="4">
    <location>
        <begin position="431"/>
        <end position="466"/>
    </location>
</feature>
<feature type="domain" description="EF-hand 3" evidence="4">
    <location>
        <begin position="467"/>
        <end position="502"/>
    </location>
</feature>
<feature type="domain" description="EF-hand 4" evidence="4">
    <location>
        <begin position="506"/>
        <end position="536"/>
    </location>
</feature>
<feature type="region of interest" description="Disordered" evidence="6">
    <location>
        <begin position="1"/>
        <end position="72"/>
    </location>
</feature>
<feature type="region of interest" description="Autoinhibitory domain" evidence="1">
    <location>
        <begin position="358"/>
        <end position="388"/>
    </location>
</feature>
<feature type="compositionally biased region" description="Polar residues" evidence="6">
    <location>
        <begin position="15"/>
        <end position="27"/>
    </location>
</feature>
<feature type="compositionally biased region" description="Low complexity" evidence="6">
    <location>
        <begin position="28"/>
        <end position="48"/>
    </location>
</feature>
<feature type="active site" description="Proton acceptor" evidence="3 5">
    <location>
        <position position="218"/>
    </location>
</feature>
<feature type="binding site" evidence="3">
    <location>
        <begin position="100"/>
        <end position="108"/>
    </location>
    <ligand>
        <name>ATP</name>
        <dbReference type="ChEBI" id="CHEBI:30616"/>
    </ligand>
</feature>
<feature type="binding site" evidence="3">
    <location>
        <position position="123"/>
    </location>
    <ligand>
        <name>ATP</name>
        <dbReference type="ChEBI" id="CHEBI:30616"/>
    </ligand>
</feature>
<feature type="binding site" evidence="4">
    <location>
        <position position="408"/>
    </location>
    <ligand>
        <name>Ca(2+)</name>
        <dbReference type="ChEBI" id="CHEBI:29108"/>
        <label>1</label>
    </ligand>
</feature>
<feature type="binding site" evidence="4">
    <location>
        <position position="410"/>
    </location>
    <ligand>
        <name>Ca(2+)</name>
        <dbReference type="ChEBI" id="CHEBI:29108"/>
        <label>1</label>
    </ligand>
</feature>
<feature type="binding site" evidence="4">
    <location>
        <position position="412"/>
    </location>
    <ligand>
        <name>Ca(2+)</name>
        <dbReference type="ChEBI" id="CHEBI:29108"/>
        <label>1</label>
    </ligand>
</feature>
<feature type="binding site" evidence="4">
    <location>
        <position position="419"/>
    </location>
    <ligand>
        <name>Ca(2+)</name>
        <dbReference type="ChEBI" id="CHEBI:29108"/>
        <label>1</label>
    </ligand>
</feature>
<feature type="binding site" evidence="4">
    <location>
        <position position="444"/>
    </location>
    <ligand>
        <name>Ca(2+)</name>
        <dbReference type="ChEBI" id="CHEBI:29108"/>
        <label>2</label>
    </ligand>
</feature>
<feature type="binding site" evidence="4">
    <location>
        <position position="446"/>
    </location>
    <ligand>
        <name>Ca(2+)</name>
        <dbReference type="ChEBI" id="CHEBI:29108"/>
        <label>2</label>
    </ligand>
</feature>
<feature type="binding site" evidence="4">
    <location>
        <position position="448"/>
    </location>
    <ligand>
        <name>Ca(2+)</name>
        <dbReference type="ChEBI" id="CHEBI:29108"/>
        <label>2</label>
    </ligand>
</feature>
<feature type="binding site" evidence="4">
    <location>
        <position position="450"/>
    </location>
    <ligand>
        <name>Ca(2+)</name>
        <dbReference type="ChEBI" id="CHEBI:29108"/>
        <label>2</label>
    </ligand>
</feature>
<feature type="binding site" evidence="4">
    <location>
        <position position="455"/>
    </location>
    <ligand>
        <name>Ca(2+)</name>
        <dbReference type="ChEBI" id="CHEBI:29108"/>
        <label>2</label>
    </ligand>
</feature>
<feature type="binding site" evidence="4">
    <location>
        <position position="480"/>
    </location>
    <ligand>
        <name>Ca(2+)</name>
        <dbReference type="ChEBI" id="CHEBI:29108"/>
        <label>3</label>
    </ligand>
</feature>
<feature type="binding site" evidence="4">
    <location>
        <position position="482"/>
    </location>
    <ligand>
        <name>Ca(2+)</name>
        <dbReference type="ChEBI" id="CHEBI:29108"/>
        <label>3</label>
    </ligand>
</feature>
<feature type="binding site" evidence="4">
    <location>
        <position position="484"/>
    </location>
    <ligand>
        <name>Ca(2+)</name>
        <dbReference type="ChEBI" id="CHEBI:29108"/>
        <label>3</label>
    </ligand>
</feature>
<feature type="binding site" evidence="4">
    <location>
        <position position="486"/>
    </location>
    <ligand>
        <name>Ca(2+)</name>
        <dbReference type="ChEBI" id="CHEBI:29108"/>
        <label>3</label>
    </ligand>
</feature>
<feature type="binding site" evidence="4">
    <location>
        <position position="491"/>
    </location>
    <ligand>
        <name>Ca(2+)</name>
        <dbReference type="ChEBI" id="CHEBI:29108"/>
        <label>3</label>
    </ligand>
</feature>
<feature type="binding site" evidence="4">
    <location>
        <position position="514"/>
    </location>
    <ligand>
        <name>Ca(2+)</name>
        <dbReference type="ChEBI" id="CHEBI:29108"/>
        <label>4</label>
    </ligand>
</feature>
<feature type="binding site" evidence="4">
    <location>
        <position position="516"/>
    </location>
    <ligand>
        <name>Ca(2+)</name>
        <dbReference type="ChEBI" id="CHEBI:29108"/>
        <label>4</label>
    </ligand>
</feature>
<feature type="binding site" evidence="4">
    <location>
        <position position="518"/>
    </location>
    <ligand>
        <name>Ca(2+)</name>
        <dbReference type="ChEBI" id="CHEBI:29108"/>
        <label>4</label>
    </ligand>
</feature>
<feature type="binding site" evidence="4">
    <location>
        <position position="520"/>
    </location>
    <ligand>
        <name>Ca(2+)</name>
        <dbReference type="ChEBI" id="CHEBI:29108"/>
        <label>4</label>
    </ligand>
</feature>
<feature type="binding site" evidence="4">
    <location>
        <position position="525"/>
    </location>
    <ligand>
        <name>Ca(2+)</name>
        <dbReference type="ChEBI" id="CHEBI:29108"/>
        <label>4</label>
    </ligand>
</feature>
<feature type="lipid moiety-binding region" description="N-myristoyl glycine" evidence="2">
    <location>
        <position position="2"/>
    </location>
</feature>